<keyword id="KW-0030">Aminoacyl-tRNA synthetase</keyword>
<keyword id="KW-0067">ATP-binding</keyword>
<keyword id="KW-0963">Cytoplasm</keyword>
<keyword id="KW-0436">Ligase</keyword>
<keyword id="KW-0479">Metal-binding</keyword>
<keyword id="KW-0547">Nucleotide-binding</keyword>
<keyword id="KW-0648">Protein biosynthesis</keyword>
<keyword id="KW-1185">Reference proteome</keyword>
<keyword id="KW-0862">Zinc</keyword>
<evidence type="ECO:0000255" key="1">
    <source>
        <dbReference type="HAMAP-Rule" id="MF_00041"/>
    </source>
</evidence>
<dbReference type="EC" id="6.1.1.16" evidence="1"/>
<dbReference type="EMBL" id="CP000613">
    <property type="protein sequence ID" value="ACI98400.1"/>
    <property type="molecule type" value="Genomic_DNA"/>
</dbReference>
<dbReference type="RefSeq" id="WP_012566190.1">
    <property type="nucleotide sequence ID" value="NC_011420.2"/>
</dbReference>
<dbReference type="SMR" id="B6ISG4"/>
<dbReference type="STRING" id="414684.RC1_0976"/>
<dbReference type="KEGG" id="rce:RC1_0976"/>
<dbReference type="eggNOG" id="COG0215">
    <property type="taxonomic scope" value="Bacteria"/>
</dbReference>
<dbReference type="HOGENOM" id="CLU_013528_0_1_5"/>
<dbReference type="OrthoDB" id="9815130at2"/>
<dbReference type="Proteomes" id="UP000001591">
    <property type="component" value="Chromosome"/>
</dbReference>
<dbReference type="GO" id="GO:0005829">
    <property type="term" value="C:cytosol"/>
    <property type="evidence" value="ECO:0007669"/>
    <property type="project" value="TreeGrafter"/>
</dbReference>
<dbReference type="GO" id="GO:0005524">
    <property type="term" value="F:ATP binding"/>
    <property type="evidence" value="ECO:0007669"/>
    <property type="project" value="UniProtKB-UniRule"/>
</dbReference>
<dbReference type="GO" id="GO:0004817">
    <property type="term" value="F:cysteine-tRNA ligase activity"/>
    <property type="evidence" value="ECO:0007669"/>
    <property type="project" value="UniProtKB-UniRule"/>
</dbReference>
<dbReference type="GO" id="GO:0008270">
    <property type="term" value="F:zinc ion binding"/>
    <property type="evidence" value="ECO:0007669"/>
    <property type="project" value="UniProtKB-UniRule"/>
</dbReference>
<dbReference type="GO" id="GO:0006423">
    <property type="term" value="P:cysteinyl-tRNA aminoacylation"/>
    <property type="evidence" value="ECO:0007669"/>
    <property type="project" value="UniProtKB-UniRule"/>
</dbReference>
<dbReference type="CDD" id="cd00672">
    <property type="entry name" value="CysRS_core"/>
    <property type="match status" value="1"/>
</dbReference>
<dbReference type="FunFam" id="3.40.50.620:FF:000009">
    <property type="entry name" value="Cysteine--tRNA ligase"/>
    <property type="match status" value="1"/>
</dbReference>
<dbReference type="Gene3D" id="1.20.120.1910">
    <property type="entry name" value="Cysteine-tRNA ligase, C-terminal anti-codon recognition domain"/>
    <property type="match status" value="1"/>
</dbReference>
<dbReference type="Gene3D" id="3.40.50.620">
    <property type="entry name" value="HUPs"/>
    <property type="match status" value="1"/>
</dbReference>
<dbReference type="HAMAP" id="MF_00041">
    <property type="entry name" value="Cys_tRNA_synth"/>
    <property type="match status" value="1"/>
</dbReference>
<dbReference type="InterPro" id="IPR015803">
    <property type="entry name" value="Cys-tRNA-ligase"/>
</dbReference>
<dbReference type="InterPro" id="IPR015273">
    <property type="entry name" value="Cys-tRNA-synt_Ia_DALR"/>
</dbReference>
<dbReference type="InterPro" id="IPR024909">
    <property type="entry name" value="Cys-tRNA/MSH_ligase"/>
</dbReference>
<dbReference type="InterPro" id="IPR056411">
    <property type="entry name" value="CysS_C"/>
</dbReference>
<dbReference type="InterPro" id="IPR014729">
    <property type="entry name" value="Rossmann-like_a/b/a_fold"/>
</dbReference>
<dbReference type="InterPro" id="IPR032678">
    <property type="entry name" value="tRNA-synt_1_cat_dom"/>
</dbReference>
<dbReference type="InterPro" id="IPR009080">
    <property type="entry name" value="tRNAsynth_Ia_anticodon-bd"/>
</dbReference>
<dbReference type="NCBIfam" id="TIGR00435">
    <property type="entry name" value="cysS"/>
    <property type="match status" value="1"/>
</dbReference>
<dbReference type="PANTHER" id="PTHR10890:SF3">
    <property type="entry name" value="CYSTEINE--TRNA LIGASE, CYTOPLASMIC"/>
    <property type="match status" value="1"/>
</dbReference>
<dbReference type="PANTHER" id="PTHR10890">
    <property type="entry name" value="CYSTEINYL-TRNA SYNTHETASE"/>
    <property type="match status" value="1"/>
</dbReference>
<dbReference type="Pfam" id="PF23493">
    <property type="entry name" value="CysS_C"/>
    <property type="match status" value="1"/>
</dbReference>
<dbReference type="Pfam" id="PF09190">
    <property type="entry name" value="DALR_2"/>
    <property type="match status" value="1"/>
</dbReference>
<dbReference type="Pfam" id="PF01406">
    <property type="entry name" value="tRNA-synt_1e"/>
    <property type="match status" value="1"/>
</dbReference>
<dbReference type="PRINTS" id="PR00983">
    <property type="entry name" value="TRNASYNTHCYS"/>
</dbReference>
<dbReference type="SMART" id="SM00840">
    <property type="entry name" value="DALR_2"/>
    <property type="match status" value="1"/>
</dbReference>
<dbReference type="SUPFAM" id="SSF47323">
    <property type="entry name" value="Anticodon-binding domain of a subclass of class I aminoacyl-tRNA synthetases"/>
    <property type="match status" value="1"/>
</dbReference>
<dbReference type="SUPFAM" id="SSF52374">
    <property type="entry name" value="Nucleotidylyl transferase"/>
    <property type="match status" value="1"/>
</dbReference>
<protein>
    <recommendedName>
        <fullName evidence="1">Cysteine--tRNA ligase</fullName>
        <ecNumber evidence="1">6.1.1.16</ecNumber>
    </recommendedName>
    <alternativeName>
        <fullName evidence="1">Cysteinyl-tRNA synthetase</fullName>
        <shortName evidence="1">CysRS</shortName>
    </alternativeName>
</protein>
<feature type="chain" id="PRO_1000090863" description="Cysteine--tRNA ligase">
    <location>
        <begin position="1"/>
        <end position="456"/>
    </location>
</feature>
<feature type="short sequence motif" description="'HIGH' region">
    <location>
        <begin position="31"/>
        <end position="41"/>
    </location>
</feature>
<feature type="short sequence motif" description="'KMSKS' region">
    <location>
        <begin position="267"/>
        <end position="271"/>
    </location>
</feature>
<feature type="binding site" evidence="1">
    <location>
        <position position="29"/>
    </location>
    <ligand>
        <name>Zn(2+)</name>
        <dbReference type="ChEBI" id="CHEBI:29105"/>
    </ligand>
</feature>
<feature type="binding site" evidence="1">
    <location>
        <position position="209"/>
    </location>
    <ligand>
        <name>Zn(2+)</name>
        <dbReference type="ChEBI" id="CHEBI:29105"/>
    </ligand>
</feature>
<feature type="binding site" evidence="1">
    <location>
        <position position="234"/>
    </location>
    <ligand>
        <name>Zn(2+)</name>
        <dbReference type="ChEBI" id="CHEBI:29105"/>
    </ligand>
</feature>
<feature type="binding site" evidence="1">
    <location>
        <position position="238"/>
    </location>
    <ligand>
        <name>Zn(2+)</name>
        <dbReference type="ChEBI" id="CHEBI:29105"/>
    </ligand>
</feature>
<feature type="binding site" evidence="1">
    <location>
        <position position="270"/>
    </location>
    <ligand>
        <name>ATP</name>
        <dbReference type="ChEBI" id="CHEBI:30616"/>
    </ligand>
</feature>
<sequence length="456" mass="50155">MALTLYNTLTRSEEAFTPIDPSNVRLYVCGPTVYDYAHVGNARTFSAFDLLARLLKHLYPRVTYARNITDVDDKIIDRSQRSGEPIDGVTARTTAQFHADMDALGLLRPDIEPRATTHIPQMIAMIGRLVEQGFAYAAEGHVLFHVPAMPDYGRLSRRSQDELIAGARVEVAPYKRSPADFVLWKPAKPGEPGWDSPWGTGRPGWHIECSAMTAAHLGAVFDIHGGGLDLIFPHHENEIAQSRCAHGTAVMANVWMHSGFLTIAGDKMSKSLGNFYTVRELLDEFPGEAIRLALLSAHYRQPLDFTKEKIAQAKQALDRWYGVLRGLEEVRAAEVPFDVLAALEDDLNTPLAISHLHELATAFHKADAAARPGLAGRLKAAAGLLGFLRQDPDAWFRGTPKGTDGLDEAAIEAAIQARKEARKAKDFAEADRIRAALLEQGIVLEDGPQGTSWKRA</sequence>
<comment type="catalytic activity">
    <reaction evidence="1">
        <text>tRNA(Cys) + L-cysteine + ATP = L-cysteinyl-tRNA(Cys) + AMP + diphosphate</text>
        <dbReference type="Rhea" id="RHEA:17773"/>
        <dbReference type="Rhea" id="RHEA-COMP:9661"/>
        <dbReference type="Rhea" id="RHEA-COMP:9679"/>
        <dbReference type="ChEBI" id="CHEBI:30616"/>
        <dbReference type="ChEBI" id="CHEBI:33019"/>
        <dbReference type="ChEBI" id="CHEBI:35235"/>
        <dbReference type="ChEBI" id="CHEBI:78442"/>
        <dbReference type="ChEBI" id="CHEBI:78517"/>
        <dbReference type="ChEBI" id="CHEBI:456215"/>
        <dbReference type="EC" id="6.1.1.16"/>
    </reaction>
</comment>
<comment type="cofactor">
    <cofactor evidence="1">
        <name>Zn(2+)</name>
        <dbReference type="ChEBI" id="CHEBI:29105"/>
    </cofactor>
    <text evidence="1">Binds 1 zinc ion per subunit.</text>
</comment>
<comment type="subunit">
    <text evidence="1">Monomer.</text>
</comment>
<comment type="subcellular location">
    <subcellularLocation>
        <location evidence="1">Cytoplasm</location>
    </subcellularLocation>
</comment>
<comment type="similarity">
    <text evidence="1">Belongs to the class-I aminoacyl-tRNA synthetase family.</text>
</comment>
<proteinExistence type="inferred from homology"/>
<gene>
    <name evidence="1" type="primary">cysS</name>
    <name type="ordered locus">RC1_0976</name>
</gene>
<name>SYC_RHOCS</name>
<reference key="1">
    <citation type="submission" date="2007-03" db="EMBL/GenBank/DDBJ databases">
        <title>Genome sequence of Rhodospirillum centenum.</title>
        <authorList>
            <person name="Touchman J.W."/>
            <person name="Bauer C."/>
            <person name="Blankenship R.E."/>
        </authorList>
    </citation>
    <scope>NUCLEOTIDE SEQUENCE [LARGE SCALE GENOMIC DNA]</scope>
    <source>
        <strain>ATCC 51521 / SW</strain>
    </source>
</reference>
<accession>B6ISG4</accession>
<organism>
    <name type="scientific">Rhodospirillum centenum (strain ATCC 51521 / SW)</name>
    <dbReference type="NCBI Taxonomy" id="414684"/>
    <lineage>
        <taxon>Bacteria</taxon>
        <taxon>Pseudomonadati</taxon>
        <taxon>Pseudomonadota</taxon>
        <taxon>Alphaproteobacteria</taxon>
        <taxon>Rhodospirillales</taxon>
        <taxon>Rhodospirillaceae</taxon>
        <taxon>Rhodospirillum</taxon>
    </lineage>
</organism>